<feature type="initiator methionine" description="Removed" evidence="1">
    <location>
        <position position="1"/>
    </location>
</feature>
<feature type="chain" id="PRO_0000082473" description="Ubiquitin-conjugating enzyme E2 E2">
    <location>
        <begin position="2"/>
        <end position="201"/>
    </location>
</feature>
<feature type="domain" description="UBC core" evidence="2">
    <location>
        <begin position="55"/>
        <end position="201"/>
    </location>
</feature>
<feature type="region of interest" description="Disordered" evidence="4">
    <location>
        <begin position="1"/>
        <end position="55"/>
    </location>
</feature>
<feature type="compositionally biased region" description="Basic and acidic residues" evidence="4">
    <location>
        <begin position="1"/>
        <end position="10"/>
    </location>
</feature>
<feature type="compositionally biased region" description="Basic and acidic residues" evidence="4">
    <location>
        <begin position="21"/>
        <end position="45"/>
    </location>
</feature>
<feature type="compositionally biased region" description="Low complexity" evidence="4">
    <location>
        <begin position="46"/>
        <end position="55"/>
    </location>
</feature>
<feature type="active site" description="Glycyl thioester intermediate" evidence="2 3">
    <location>
        <position position="139"/>
    </location>
</feature>
<feature type="modified residue" description="N-acetylserine" evidence="1">
    <location>
        <position position="2"/>
    </location>
</feature>
<feature type="modified residue" description="Phosphoserine" evidence="1">
    <location>
        <position position="11"/>
    </location>
</feature>
<feature type="modified residue" description="Phosphoserine" evidence="1">
    <location>
        <position position="15"/>
    </location>
</feature>
<feature type="modified residue" description="Phosphoserine" evidence="1">
    <location>
        <position position="18"/>
    </location>
</feature>
<feature type="modified residue" description="Phosphoserine" evidence="1">
    <location>
        <position position="19"/>
    </location>
</feature>
<gene>
    <name type="primary">Ube2e2</name>
</gene>
<reference key="1">
    <citation type="journal article" date="2004" name="Genome Res.">
        <title>The status, quality, and expansion of the NIH full-length cDNA project: the Mammalian Gene Collection (MGC).</title>
        <authorList>
            <consortium name="The MGC Project Team"/>
        </authorList>
    </citation>
    <scope>NUCLEOTIDE SEQUENCE [LARGE SCALE MRNA]</scope>
    <source>
        <tissue>Salivary gland</tissue>
    </source>
</reference>
<keyword id="KW-0007">Acetylation</keyword>
<keyword id="KW-0067">ATP-binding</keyword>
<keyword id="KW-0547">Nucleotide-binding</keyword>
<keyword id="KW-0597">Phosphoprotein</keyword>
<keyword id="KW-1185">Reference proteome</keyword>
<keyword id="KW-0808">Transferase</keyword>
<keyword id="KW-0832">Ubl conjugation</keyword>
<keyword id="KW-0833">Ubl conjugation pathway</keyword>
<dbReference type="EC" id="2.3.2.23"/>
<dbReference type="EMBL" id="BC016265">
    <property type="protein sequence ID" value="AAH16265.1"/>
    <property type="molecule type" value="mRNA"/>
</dbReference>
<dbReference type="CCDS" id="CCDS26838.1"/>
<dbReference type="RefSeq" id="NP_001347256.1">
    <property type="nucleotide sequence ID" value="NM_001360327.1"/>
</dbReference>
<dbReference type="RefSeq" id="NP_659088.1">
    <property type="nucleotide sequence ID" value="NM_144839.2"/>
</dbReference>
<dbReference type="RefSeq" id="XP_006518076.1">
    <property type="nucleotide sequence ID" value="XM_006518013.1"/>
</dbReference>
<dbReference type="SMR" id="Q91W82"/>
<dbReference type="BioGRID" id="230065">
    <property type="interactions" value="5"/>
</dbReference>
<dbReference type="FunCoup" id="Q91W82">
    <property type="interactions" value="1405"/>
</dbReference>
<dbReference type="STRING" id="10090.ENSMUSP00000115738"/>
<dbReference type="iPTMnet" id="Q91W82"/>
<dbReference type="PhosphoSitePlus" id="Q91W82"/>
<dbReference type="SwissPalm" id="Q91W82"/>
<dbReference type="jPOST" id="Q91W82"/>
<dbReference type="PaxDb" id="10090-ENSMUSP00000115738"/>
<dbReference type="ProteomicsDB" id="297772"/>
<dbReference type="Pumba" id="Q91W82"/>
<dbReference type="Antibodypedia" id="11339">
    <property type="antibodies" value="184 antibodies from 31 providers"/>
</dbReference>
<dbReference type="DNASU" id="218793"/>
<dbReference type="Ensembl" id="ENSMUST00000076133.10">
    <property type="protein sequence ID" value="ENSMUSP00000075495.4"/>
    <property type="gene ID" value="ENSMUSG00000058317.13"/>
</dbReference>
<dbReference type="Ensembl" id="ENSMUST00000150727.8">
    <property type="protein sequence ID" value="ENSMUSP00000115738.2"/>
    <property type="gene ID" value="ENSMUSG00000058317.13"/>
</dbReference>
<dbReference type="GeneID" id="218793"/>
<dbReference type="KEGG" id="mmu:218793"/>
<dbReference type="UCSC" id="uc007shv.1">
    <property type="organism name" value="mouse"/>
</dbReference>
<dbReference type="AGR" id="MGI:2384997"/>
<dbReference type="CTD" id="7325"/>
<dbReference type="MGI" id="MGI:2384997">
    <property type="gene designation" value="Ube2e2"/>
</dbReference>
<dbReference type="VEuPathDB" id="HostDB:ENSMUSG00000058317"/>
<dbReference type="eggNOG" id="KOG0417">
    <property type="taxonomic scope" value="Eukaryota"/>
</dbReference>
<dbReference type="GeneTree" id="ENSGT00940000155985"/>
<dbReference type="InParanoid" id="Q91W82"/>
<dbReference type="OMA" id="CDCSHES"/>
<dbReference type="OrthoDB" id="7851174at2759"/>
<dbReference type="PhylomeDB" id="Q91W82"/>
<dbReference type="TreeFam" id="TF101117"/>
<dbReference type="Reactome" id="R-MMU-983168">
    <property type="pathway name" value="Antigen processing: Ubiquitination &amp; Proteasome degradation"/>
</dbReference>
<dbReference type="UniPathway" id="UPA00143"/>
<dbReference type="BioGRID-ORCS" id="218793">
    <property type="hits" value="2 hits in 79 CRISPR screens"/>
</dbReference>
<dbReference type="ChiTaRS" id="Ube2e2">
    <property type="organism name" value="mouse"/>
</dbReference>
<dbReference type="PRO" id="PR:Q91W82"/>
<dbReference type="Proteomes" id="UP000000589">
    <property type="component" value="Chromosome 14"/>
</dbReference>
<dbReference type="RNAct" id="Q91W82">
    <property type="molecule type" value="protein"/>
</dbReference>
<dbReference type="Bgee" id="ENSMUSG00000058317">
    <property type="expression patterns" value="Expressed in dentate gyrus of hippocampal formation granule cell and 255 other cell types or tissues"/>
</dbReference>
<dbReference type="ExpressionAtlas" id="Q91W82">
    <property type="expression patterns" value="baseline and differential"/>
</dbReference>
<dbReference type="GO" id="GO:0005524">
    <property type="term" value="F:ATP binding"/>
    <property type="evidence" value="ECO:0007669"/>
    <property type="project" value="UniProtKB-KW"/>
</dbReference>
<dbReference type="GO" id="GO:0042296">
    <property type="term" value="F:ISG15 transferase activity"/>
    <property type="evidence" value="ECO:0007669"/>
    <property type="project" value="Ensembl"/>
</dbReference>
<dbReference type="GO" id="GO:0061631">
    <property type="term" value="F:ubiquitin conjugating enzyme activity"/>
    <property type="evidence" value="ECO:0000266"/>
    <property type="project" value="MGI"/>
</dbReference>
<dbReference type="GO" id="GO:0006974">
    <property type="term" value="P:DNA damage response"/>
    <property type="evidence" value="ECO:0000266"/>
    <property type="project" value="MGI"/>
</dbReference>
<dbReference type="GO" id="GO:0032020">
    <property type="term" value="P:ISG15-protein conjugation"/>
    <property type="evidence" value="ECO:0007669"/>
    <property type="project" value="Ensembl"/>
</dbReference>
<dbReference type="GO" id="GO:1900087">
    <property type="term" value="P:positive regulation of G1/S transition of mitotic cell cycle"/>
    <property type="evidence" value="ECO:0000266"/>
    <property type="project" value="MGI"/>
</dbReference>
<dbReference type="GO" id="GO:0070979">
    <property type="term" value="P:protein K11-linked ubiquitination"/>
    <property type="evidence" value="ECO:0007669"/>
    <property type="project" value="Ensembl"/>
</dbReference>
<dbReference type="GO" id="GO:0070936">
    <property type="term" value="P:protein K48-linked ubiquitination"/>
    <property type="evidence" value="ECO:0007669"/>
    <property type="project" value="Ensembl"/>
</dbReference>
<dbReference type="GO" id="GO:0070534">
    <property type="term" value="P:protein K63-linked ubiquitination"/>
    <property type="evidence" value="ECO:0007669"/>
    <property type="project" value="Ensembl"/>
</dbReference>
<dbReference type="GO" id="GO:0006513">
    <property type="term" value="P:protein monoubiquitination"/>
    <property type="evidence" value="ECO:0007669"/>
    <property type="project" value="Ensembl"/>
</dbReference>
<dbReference type="CDD" id="cd23793">
    <property type="entry name" value="UBCc_UBE2E"/>
    <property type="match status" value="1"/>
</dbReference>
<dbReference type="FunFam" id="3.10.110.10:FF:000003">
    <property type="entry name" value="Ubiquitin-conjugating enzyme E2 E3"/>
    <property type="match status" value="1"/>
</dbReference>
<dbReference type="Gene3D" id="3.10.110.10">
    <property type="entry name" value="Ubiquitin Conjugating Enzyme"/>
    <property type="match status" value="1"/>
</dbReference>
<dbReference type="InterPro" id="IPR000608">
    <property type="entry name" value="UBQ-conjugat_E2_core"/>
</dbReference>
<dbReference type="InterPro" id="IPR023313">
    <property type="entry name" value="UBQ-conjugating_AS"/>
</dbReference>
<dbReference type="InterPro" id="IPR016135">
    <property type="entry name" value="UBQ-conjugating_enzyme/RWD"/>
</dbReference>
<dbReference type="PANTHER" id="PTHR24068">
    <property type="entry name" value="UBIQUITIN-CONJUGATING ENZYME E2"/>
    <property type="match status" value="1"/>
</dbReference>
<dbReference type="Pfam" id="PF00179">
    <property type="entry name" value="UQ_con"/>
    <property type="match status" value="1"/>
</dbReference>
<dbReference type="SMART" id="SM00212">
    <property type="entry name" value="UBCc"/>
    <property type="match status" value="1"/>
</dbReference>
<dbReference type="SUPFAM" id="SSF54495">
    <property type="entry name" value="UBC-like"/>
    <property type="match status" value="1"/>
</dbReference>
<dbReference type="PROSITE" id="PS00183">
    <property type="entry name" value="UBC_1"/>
    <property type="match status" value="1"/>
</dbReference>
<dbReference type="PROSITE" id="PS50127">
    <property type="entry name" value="UBC_2"/>
    <property type="match status" value="1"/>
</dbReference>
<proteinExistence type="evidence at transcript level"/>
<comment type="function">
    <text evidence="1">Accepts ubiquitin from the E1 complex and catalyzes its covalent attachment to other proteins. In vitro catalyzes 'Lys-11'- and 'Lys-48'-, as well as 'Lys-63'-linked polyubiquitination. Catalyzes the ISGylation of influenza A virus NS1 protein.</text>
</comment>
<comment type="catalytic activity">
    <reaction evidence="1 2 3">
        <text>S-ubiquitinyl-[E1 ubiquitin-activating enzyme]-L-cysteine + [E2 ubiquitin-conjugating enzyme]-L-cysteine = [E1 ubiquitin-activating enzyme]-L-cysteine + S-ubiquitinyl-[E2 ubiquitin-conjugating enzyme]-L-cysteine.</text>
        <dbReference type="EC" id="2.3.2.23"/>
    </reaction>
</comment>
<comment type="pathway">
    <text evidence="2">Protein modification; protein ubiquitination.</text>
</comment>
<comment type="PTM">
    <text evidence="1">Autoubiquitinated.</text>
</comment>
<comment type="similarity">
    <text evidence="2">Belongs to the ubiquitin-conjugating enzyme family.</text>
</comment>
<organism>
    <name type="scientific">Mus musculus</name>
    <name type="common">Mouse</name>
    <dbReference type="NCBI Taxonomy" id="10090"/>
    <lineage>
        <taxon>Eukaryota</taxon>
        <taxon>Metazoa</taxon>
        <taxon>Chordata</taxon>
        <taxon>Craniata</taxon>
        <taxon>Vertebrata</taxon>
        <taxon>Euteleostomi</taxon>
        <taxon>Mammalia</taxon>
        <taxon>Eutheria</taxon>
        <taxon>Euarchontoglires</taxon>
        <taxon>Glires</taxon>
        <taxon>Rodentia</taxon>
        <taxon>Myomorpha</taxon>
        <taxon>Muroidea</taxon>
        <taxon>Muridae</taxon>
        <taxon>Murinae</taxon>
        <taxon>Mus</taxon>
        <taxon>Mus</taxon>
    </lineage>
</organism>
<evidence type="ECO:0000250" key="1">
    <source>
        <dbReference type="UniProtKB" id="Q96LR5"/>
    </source>
</evidence>
<evidence type="ECO:0000255" key="2">
    <source>
        <dbReference type="PROSITE-ProRule" id="PRU00388"/>
    </source>
</evidence>
<evidence type="ECO:0000255" key="3">
    <source>
        <dbReference type="PROSITE-ProRule" id="PRU10133"/>
    </source>
</evidence>
<evidence type="ECO:0000256" key="4">
    <source>
        <dbReference type="SAM" id="MobiDB-lite"/>
    </source>
</evidence>
<name>UB2E2_MOUSE</name>
<protein>
    <recommendedName>
        <fullName>Ubiquitin-conjugating enzyme E2 E2</fullName>
        <ecNumber>2.3.2.23</ecNumber>
    </recommendedName>
    <alternativeName>
        <fullName>E2 ubiquitin-conjugating enzyme E2</fullName>
    </alternativeName>
    <alternativeName>
        <fullName>Ubiquitin carrier protein E2</fullName>
    </alternativeName>
    <alternativeName>
        <fullName>Ubiquitin-protein ligase E2</fullName>
    </alternativeName>
</protein>
<sequence length="201" mass="22241">MSTEAQRVDDSPSTSGGSSDGDQRESVQQEPDREQVQPKKKEGKISSKTAAKLSTSAKRIQKELAEITLDPPPNCSAGPKGDNIYEWRSTILGPPGSVYEGGVFFLDITFSPDYPFKPPKVTFRTRIYHCNINSQGVICLDILKDNWSPALTISKVLLSICSLLTDCNPADPLVGSIATQYMTNRAEHDRMARQWTKRYAT</sequence>
<accession>Q91W82</accession>